<organism>
    <name type="scientific">Plasmodium falciparum (isolate 3D7)</name>
    <dbReference type="NCBI Taxonomy" id="36329"/>
    <lineage>
        <taxon>Eukaryota</taxon>
        <taxon>Sar</taxon>
        <taxon>Alveolata</taxon>
        <taxon>Apicomplexa</taxon>
        <taxon>Aconoidasida</taxon>
        <taxon>Haemosporida</taxon>
        <taxon>Plasmodiidae</taxon>
        <taxon>Plasmodium</taxon>
        <taxon>Plasmodium (Laverania)</taxon>
    </lineage>
</organism>
<evidence type="ECO:0000250" key="1">
    <source>
        <dbReference type="UniProtKB" id="Q9Y7B3"/>
    </source>
</evidence>
<evidence type="ECO:0000255" key="2"/>
<evidence type="ECO:0000256" key="3">
    <source>
        <dbReference type="SAM" id="MobiDB-lite"/>
    </source>
</evidence>
<evidence type="ECO:0000269" key="4">
    <source>
    </source>
</evidence>
<evidence type="ECO:0000305" key="5"/>
<evidence type="ECO:0000312" key="6">
    <source>
        <dbReference type="EMBL" id="CAB39005.1"/>
    </source>
</evidence>
<accession>O97239</accession>
<comment type="function">
    <text evidence="1">May be involved in protein traffic between late Golgi and early endosomes.</text>
</comment>
<comment type="subcellular location">
    <subcellularLocation>
        <location evidence="2">Membrane</location>
        <topology evidence="2">Multi-pass membrane protein</topology>
    </subcellularLocation>
</comment>
<comment type="developmental stage">
    <text evidence="4">Expressed during the asexual cell-cycle on the cell surface of the host erythrocytes.</text>
</comment>
<comment type="biotechnology">
    <text evidence="4">Possible candidate for an effective malaria vaccine as determined by epitope response in sera.</text>
</comment>
<comment type="similarity">
    <text evidence="2">Belongs to the DOP1 family.</text>
</comment>
<dbReference type="EMBL" id="AL844502">
    <property type="protein sequence ID" value="CAB39005.1"/>
    <property type="molecule type" value="Genomic_DNA"/>
</dbReference>
<dbReference type="RefSeq" id="XP_001351131.1">
    <property type="nucleotide sequence ID" value="XM_001351095.1"/>
</dbReference>
<dbReference type="BioGRID" id="1209624">
    <property type="interactions" value="7"/>
</dbReference>
<dbReference type="FunCoup" id="O97239">
    <property type="interactions" value="293"/>
</dbReference>
<dbReference type="IntAct" id="O97239">
    <property type="interactions" value="7"/>
</dbReference>
<dbReference type="STRING" id="36329.O97239"/>
<dbReference type="PaxDb" id="5833-PFC0245c"/>
<dbReference type="EnsemblProtists" id="CAB39005">
    <property type="protein sequence ID" value="CAB39005"/>
    <property type="gene ID" value="PF3D7_0305500"/>
</dbReference>
<dbReference type="KEGG" id="pfa:PF3D7_0305500"/>
<dbReference type="VEuPathDB" id="PlasmoDB:PF3D7_0305500"/>
<dbReference type="HOGENOM" id="CLU_225426_0_0_1"/>
<dbReference type="InParanoid" id="O97239"/>
<dbReference type="OMA" id="DYNYNCK"/>
<dbReference type="OrthoDB" id="297643at2759"/>
<dbReference type="PhylomeDB" id="O97239"/>
<dbReference type="Proteomes" id="UP000001450">
    <property type="component" value="Chromosome 3"/>
</dbReference>
<dbReference type="GO" id="GO:0005829">
    <property type="term" value="C:cytosol"/>
    <property type="evidence" value="ECO:0007669"/>
    <property type="project" value="GOC"/>
</dbReference>
<dbReference type="GO" id="GO:0005768">
    <property type="term" value="C:endosome"/>
    <property type="evidence" value="ECO:0000318"/>
    <property type="project" value="GO_Central"/>
</dbReference>
<dbReference type="GO" id="GO:0016020">
    <property type="term" value="C:membrane"/>
    <property type="evidence" value="ECO:0000303"/>
    <property type="project" value="UniProtKB"/>
</dbReference>
<dbReference type="GO" id="GO:0005777">
    <property type="term" value="C:peroxisome"/>
    <property type="evidence" value="ECO:0000303"/>
    <property type="project" value="UniProtKB"/>
</dbReference>
<dbReference type="GO" id="GO:0005802">
    <property type="term" value="C:trans-Golgi network"/>
    <property type="evidence" value="ECO:0000318"/>
    <property type="project" value="GO_Central"/>
</dbReference>
<dbReference type="GO" id="GO:0006895">
    <property type="term" value="P:Golgi to endosome transport"/>
    <property type="evidence" value="ECO:0007669"/>
    <property type="project" value="InterPro"/>
</dbReference>
<dbReference type="GO" id="GO:0015031">
    <property type="term" value="P:protein transport"/>
    <property type="evidence" value="ECO:0007669"/>
    <property type="project" value="UniProtKB-KW"/>
</dbReference>
<dbReference type="InterPro" id="IPR016024">
    <property type="entry name" value="ARM-type_fold"/>
</dbReference>
<dbReference type="InterPro" id="IPR040314">
    <property type="entry name" value="DOP1"/>
</dbReference>
<dbReference type="InterPro" id="IPR007249">
    <property type="entry name" value="DOP1_N"/>
</dbReference>
<dbReference type="PANTHER" id="PTHR14042">
    <property type="entry name" value="DOPEY-RELATED"/>
    <property type="match status" value="1"/>
</dbReference>
<dbReference type="PANTHER" id="PTHR14042:SF24">
    <property type="entry name" value="PROTEIN DOPEY-1 HOMOLOG"/>
    <property type="match status" value="1"/>
</dbReference>
<dbReference type="Pfam" id="PF04118">
    <property type="entry name" value="Dopey_N"/>
    <property type="match status" value="1"/>
</dbReference>
<dbReference type="SUPFAM" id="SSF48371">
    <property type="entry name" value="ARM repeat"/>
    <property type="match status" value="1"/>
</dbReference>
<keyword id="KW-0175">Coiled coil</keyword>
<keyword id="KW-0472">Membrane</keyword>
<keyword id="KW-0477">Merozoite</keyword>
<keyword id="KW-0653">Protein transport</keyword>
<keyword id="KW-1185">Reference proteome</keyword>
<keyword id="KW-0812">Transmembrane</keyword>
<keyword id="KW-1133">Transmembrane helix</keyword>
<keyword id="KW-0813">Transport</keyword>
<reference evidence="6" key="1">
    <citation type="journal article" date="1999" name="Nature">
        <title>The complete nucleotide sequence of chromosome 3 of Plasmodium falciparum.</title>
        <authorList>
            <person name="Bowman S."/>
            <person name="Lawson D."/>
            <person name="Basham D."/>
            <person name="Brown D."/>
            <person name="Chillingworth T."/>
            <person name="Churcher C.M."/>
            <person name="Craig A."/>
            <person name="Davies R.M."/>
            <person name="Devlin K."/>
            <person name="Feltwell T."/>
            <person name="Gentles S."/>
            <person name="Gwilliam R."/>
            <person name="Hamlin N."/>
            <person name="Harris D."/>
            <person name="Holroyd S."/>
            <person name="Hornsby T."/>
            <person name="Horrocks P."/>
            <person name="Jagels K."/>
            <person name="Jassal B."/>
            <person name="Kyes S."/>
            <person name="McLean J."/>
            <person name="Moule S."/>
            <person name="Mungall K.L."/>
            <person name="Murphy L."/>
            <person name="Oliver K."/>
            <person name="Quail M.A."/>
            <person name="Rajandream M.A."/>
            <person name="Rutter S."/>
            <person name="Skelton J."/>
            <person name="Squares R."/>
            <person name="Squares S."/>
            <person name="Sulston J.E."/>
            <person name="Whitehead S."/>
            <person name="Woodward J.R."/>
            <person name="Newbold C."/>
            <person name="Barrell B.G."/>
        </authorList>
    </citation>
    <scope>NUCLEOTIDE SEQUENCE [LARGE SCALE GENOMIC DNA]</scope>
    <source>
        <strain>3D7</strain>
    </source>
</reference>
<reference key="2">
    <citation type="journal article" date="2002" name="Nature">
        <title>Genome sequence of the human malaria parasite Plasmodium falciparum.</title>
        <authorList>
            <person name="Gardner M.J."/>
            <person name="Hall N."/>
            <person name="Fung E."/>
            <person name="White O."/>
            <person name="Berriman M."/>
            <person name="Hyman R.W."/>
            <person name="Carlton J.M."/>
            <person name="Pain A."/>
            <person name="Nelson K.E."/>
            <person name="Bowman S."/>
            <person name="Paulsen I.T."/>
            <person name="James K.D."/>
            <person name="Eisen J.A."/>
            <person name="Rutherford K.M."/>
            <person name="Salzberg S.L."/>
            <person name="Craig A."/>
            <person name="Kyes S."/>
            <person name="Chan M.-S."/>
            <person name="Nene V."/>
            <person name="Shallom S.J."/>
            <person name="Suh B."/>
            <person name="Peterson J."/>
            <person name="Angiuoli S."/>
            <person name="Pertea M."/>
            <person name="Allen J."/>
            <person name="Selengut J."/>
            <person name="Haft D."/>
            <person name="Mather M.W."/>
            <person name="Vaidya A.B."/>
            <person name="Martin D.M.A."/>
            <person name="Fairlamb A.H."/>
            <person name="Fraunholz M.J."/>
            <person name="Roos D.S."/>
            <person name="Ralph S.A."/>
            <person name="McFadden G.I."/>
            <person name="Cummings L.M."/>
            <person name="Subramanian G.M."/>
            <person name="Mungall C."/>
            <person name="Venter J.C."/>
            <person name="Carucci D.J."/>
            <person name="Hoffman S.L."/>
            <person name="Newbold C."/>
            <person name="Davis R.W."/>
            <person name="Fraser C.M."/>
            <person name="Barrell B.G."/>
        </authorList>
    </citation>
    <scope>NUCLEOTIDE SEQUENCE [LARGE SCALE GENOMIC DNA]</scope>
    <source>
        <strain>3D7</strain>
    </source>
</reference>
<reference evidence="6" key="3">
    <citation type="journal article" date="2002" name="Nature">
        <title>Sequence of Plasmodium falciparum chromosomes 1, 3-9 and 13.</title>
        <authorList>
            <person name="Hall N."/>
            <person name="Pain A."/>
            <person name="Berriman M."/>
            <person name="Churcher C.M."/>
            <person name="Harris B."/>
            <person name="Harris D."/>
            <person name="Mungall K.L."/>
            <person name="Bowman S."/>
            <person name="Atkin R."/>
            <person name="Baker S."/>
            <person name="Barron A."/>
            <person name="Brooks K."/>
            <person name="Buckee C.O."/>
            <person name="Burrows C."/>
            <person name="Cherevach I."/>
            <person name="Chillingworth C."/>
            <person name="Chillingworth T."/>
            <person name="Christodoulou Z."/>
            <person name="Clark L."/>
            <person name="Clark R."/>
            <person name="Corton C."/>
            <person name="Cronin A."/>
            <person name="Davies R.M."/>
            <person name="Davis P."/>
            <person name="Dear P."/>
            <person name="Dearden F."/>
            <person name="Doggett J."/>
            <person name="Feltwell T."/>
            <person name="Goble A."/>
            <person name="Goodhead I."/>
            <person name="Gwilliam R."/>
            <person name="Hamlin N."/>
            <person name="Hance Z."/>
            <person name="Harper D."/>
            <person name="Hauser H."/>
            <person name="Hornsby T."/>
            <person name="Holroyd S."/>
            <person name="Horrocks P."/>
            <person name="Humphray S."/>
            <person name="Jagels K."/>
            <person name="James K.D."/>
            <person name="Johnson D."/>
            <person name="Kerhornou A."/>
            <person name="Knights A."/>
            <person name="Konfortov B."/>
            <person name="Kyes S."/>
            <person name="Larke N."/>
            <person name="Lawson D."/>
            <person name="Lennard N."/>
            <person name="Line A."/>
            <person name="Maddison M."/>
            <person name="Mclean J."/>
            <person name="Mooney P."/>
            <person name="Moule S."/>
            <person name="Murphy L."/>
            <person name="Oliver K."/>
            <person name="Ormond D."/>
            <person name="Price C."/>
            <person name="Quail M.A."/>
            <person name="Rabbinowitsch E."/>
            <person name="Rajandream M.A."/>
            <person name="Rutter S."/>
            <person name="Rutherford K.M."/>
            <person name="Sanders M."/>
            <person name="Simmonds M."/>
            <person name="Seeger K."/>
            <person name="Sharp S."/>
            <person name="Smith R."/>
            <person name="Squares R."/>
            <person name="Squares S."/>
            <person name="Stevens K."/>
            <person name="Taylor K."/>
            <person name="Tivey A."/>
            <person name="Unwin L."/>
            <person name="Whitehead S."/>
            <person name="Woodward J.R."/>
            <person name="Sulston J.E."/>
            <person name="Craig A."/>
            <person name="Newbold C."/>
            <person name="Barrell B.G."/>
        </authorList>
    </citation>
    <scope>NUCLEOTIDE SEQUENCE [LARGE SCALE GENOMIC DNA]</scope>
    <source>
        <strain>3D7</strain>
    </source>
</reference>
<reference evidence="5" key="4">
    <citation type="journal article" date="2007" name="PLoS ONE">
        <title>Rapid identification of malaria vaccine candidates based on alpha-helical coiled coil protein motif.</title>
        <authorList>
            <person name="Villard V."/>
            <person name="Agak G.W."/>
            <person name="Frank G."/>
            <person name="Jafarshad A."/>
            <person name="Servis C."/>
            <person name="Nebie I."/>
            <person name="Sirima S.B."/>
            <person name="Felger I."/>
            <person name="Arevalo-Herrera M."/>
            <person name="Herrera S."/>
            <person name="Heitz F."/>
            <person name="Baecker V."/>
            <person name="Druilhe P."/>
            <person name="Kajava A.V."/>
            <person name="Corradin G."/>
        </authorList>
    </citation>
    <scope>SYNTHESIS OF 2215-2262</scope>
    <scope>DEVELOPMENTAL STAGE</scope>
    <scope>POSSIBLE CANDIDATE MALARIA EPITOPE</scope>
</reference>
<name>DOP1_PLAF7</name>
<sequence length="3933" mass="467882">MIKKSEESKRLLRKKLNNDITNILLLFEKVQEWADLSNILQKLYLTIEKYELFVNVSSKFLLFRRLSQCLNPLLPSGVHSKALIIYSSIFKKVEMDFFINNIHILCSGIFEFMLHCTINLKTIYFKNIKSILRLKENVYIFAYALLLSLFNVVDSDNNILLYIYSINNYIGENIFFNNIWLLLLRHPEIRTNILNFLEASFSPQIYLLSKERIKMLLPYKDHLVLSSIIYCLNDKNILNQRITLSLLINNFPLSHVPNKKNKKKIIDKSKSNDYHMDKPPYSPFNASTSSVILNNSNMDSMNDNRINENNINNNDNKRHNIQINNDYLFGDMMNKQNDTTIMQSNKMLNRHNIIGEQHLDDDLLSSIHDDNSEKKNNNNFMLLNENNKISTSKEHLDNMHNRGIKSHEDIMGSNQNKMNLSNDEKDHWGGNLNSKVGNYDDKNICGKKHLGLKSEYGQVSYDESLERRLNNNNNNNNNNNNNNNNNGDNLKYQGSVDYDEHDISMSTENDKYGKMGNENMNDVFISKGKMMRKGYEDDGHHHININDDDNLNYDDNEDDEYGNYHNNNYNDRNYFNEYDEDDQYENNNNNNHSNNNNMLHLGSVDRNRRKQLKKKINNIGQTNNYDDDEEEEDEEEEDNNNNTSYNNNNNNSSSSSSIFFSDTSKKLIARNVIFLLKKSDIGLNRRIFKYLYLYESNDEKNFKDKEINFENYKIYCETIIDILENKSDDNYNSIAEVIYILFKNKDYININRYIMEQVFLYLLNFCYKNREDTSIKSFLKNMLNLNLISYENILNIFLYTFYYLRRNDDLFVHYTNIYIKKYINLLNIMTFFVEFIKHMNKYLYIQFLFHFNLATLKLMNFLNLKIINIIKKYSHVKDLNEKYFIDSNDVVSGRHSTLYYFYFFVTHYNNYYLNKCLSIIVKDILPQNPSNRKMGNYQSHYYANNKHMLYMNTHEIHSARMEEYSNKIQKVGFKNEIVDRKNKYDNNEYSESEIKMRAVDNSMNYIKRKVKKKNMESKDSSNSMSNMEINTNSTMANRLNHMQHIQHDGISSMEHMNNKINDNNNNNNVNYFFDGNNSNNNNNNNILENNNKLYFDKGYNGNYSKIENDQSFHNILMKYKFKLKQNLIDAIIKNHELYFFTNNCEYIIFLFYNYHLLIEKEKLNKSCFYFLKNILNNCTCENKNKFYFWCFLFLHIIRINFNKSLLKNYKIKEAGDDTDDDDDDDDDDDDEEEDDDDEDDDDEDDEEEDDEEDLGVDGLKNMSSKKGKKKKKKSVHKNKLMNKKYGRGGSSKYYYYLTSDKEIMLHGGMMGGVNYSDMEHDEDNLDVDDEDEQMFSYNKNKIRNKHFGELNKMKYMNEDITNNNNNINNNSNNNNNNKNNINNNNNNNNNNNNNNNNLNNLNNFNNNVSINNGNNKYRNYFRSTEEELLFNKRFVEFLLPYSNNIAKYIFQYIKILKKNKKFIKLFFDINYLYFFCDNMFCLKILKKSLKCKDNHELTINVKVILEYIINSKTNEYHIIHSNFYNLTHDVFKLYNRRNNLINYYLIKYIMRNKENLSYIFDNIIISMFDLITEIENLYEKIEMMKKDLSYSMMNNNDHVYDPNGMIEAADQRKSHYVSLKDNMNNMNNMNNVNNMNNVNNMNNVNNVNNVNNVNYHNNTINNNNNNNNFSNHTSYVNEKTQENNYHNLMNTYEKYLKKLKCKFDYISYFFLNMENFMLWLYKHKISKKIYHSRNKMTLTNYEKNMAIIICYICTEGNINSFFFRNYLDVFFILFLKIIYLNENISELNNSANNIIQKEKNNLKHNSLLEFKRDTLSMLNNIFNINHNKKFEYMKILNLYYRQIIHHLLFLYYYFTVKKYYVLQLQLVHFIRYILPLYEKNIDKKFLTNESTEKDKVFKRMKYNNYEEFISASKYHFEIINRNNYNMKNDVFIFSILRKSMTIIFNLNEQVLYKEVLKTIIDLIENIIDEKEVKNYYLTVFFLDLLYIIKMEDQKKKKNIFFIMKFCQFLIEIFKLIYRDEMKNELKCDKKFQDDNITIDIIENALSNNKMSTASFCTIFSIKTDDKFVNVQHKNISNLFSVIFNLYAFLKKKIKLYYKHNKHLINNDDKNNVVNNNSYIYYDNNSNVYNNNNTNIYNNNNNNENNAFNNNMPNNSNIMNNMNNMNDIYHISQHTNNNIRYNDVSSCGARGHNINSNENVNQNDLNNNSNYNYNRGMNNMNGDINNINGDINNMNGDINNMNGDINNMNGDINNMNGDINNMNGGNFKNPNSYNNNNNMNSYYSHNSSDYHKDNDNMRNNVNSSNSNFHNNNQDVQIMNRKNDSDGNVGNFDNNSTYSYMNNVNNDISMRLTNINNNNNININNNNNNNNNLFAYNKNNPNALVNNMNNQDKPDQHNNSHQYMYKENDMNQFGNSNYNNMDNTNNKFYNNYNYGKNVEGHTIYDNNNNNNNNSNNGAVNINSVQGENNVMSRNNILFNHNVNNNEYYFSQKNEDNMASMNNNHHNNYHNNNNNHHNNNINNHHNNNINNHHNMNRNNNIYSEDSKTNECYSMREKMGDVNVAYNSNFYDDKNNYTHMKNDLIKNEQKNNYGFCNNHENTFIYNCKNRMNRNNYAFNMGSKKNKKIMLLKVCLSNIISINKLLYFITRPEFLFIDNLYSIFKDYIKNRNEYNKERLSKSDYYYEQREKLYKEHRRKMNRQNIRTDSSNNNNNNNINSNNNNNNNNNNNNNNNNNNNNNIYNNNNYYYSSSINKVSFDDDEKIEVESFLDHNGVVGSNKKIKREKIREYFKKEKNLLKKLNFMTKFSKNTIKKSMIVMNNSDECIEKKKLSFSLTLLTEFDDVILIKIIDDLLNYYEKYKSKINLNEFMYFLFNIYLNICTLTKRIINHFIDFIFSFIKKITQTSQNIMSSLWFLYILFIIENNHIYVFNDKLQKKIIVEQISILIQISLYSYYSKNVKNNYNIQTPLPNFVQPFNIYYIIQNYFINNNYFHIKKNNKNIRYFYIKNLKLIEKNFNINDYSEIAAINALSFLLMCFYHTVNYNGTNKSYICESSVNIFYEHFSKYISLIYNNSLQNIFYRYVFLLIMNLLIDYNANSKYYIKKITFDLYSYITNVDIRCIKALSTLFKKLNETNIDELLLVPTSSIFSLKFNIINSRINYINKLSLIILAGNRNFYLCHLPKIAENISEYIKFCNDLKLYREILILICIIIIKNDENEIYIIIPTFISLILQIYHVERIKYKMAVENINNIDKDDDNYIYDFNSYNNKDVLSLLKTLLIIINILIKRNVSFINFYSWIFFKDISIKKNRLEQQNREPGNLMIYPGHKTLVYNNKKKKQKNVVRYVSSSSDKDESSVYNISVDEENSLKTQGRFFDDTYYKRKDNSGYTNKMKNFNSLTYEDKSSLMTGNQTSSTKDVGGMVNNAIRQNIEQNNMIHPNQINNNNNNNNNNNNVYNFNDFTNSMNQPNVINNNKKKKAFTTDDYFVKYDENQKVTKQTKLNHHNEDNLNDTITVYLNSNQEDYLYESKNNFTSIRSEHISSMVDIKKGSILNSNNILTNDNNTNNNIHSNIHNGSSSNNNNNNNSVCTGIKLDESKFVPFLDIIERIYSPNNILNKKYVSSEELKNEKSTRTYNSSLQEGSDYDEEEDEEYDVDADVDVDVDVDDDDDDDVDIVDVDVDDVVVDYNYYDNENNSVKIIDVDERKRSVHFYPQHLDGNTLKKNLYYNDNYLREYILSTKNELSGYSSFENNLSSSSVNSIKSNFSNTFSKDNINKNIITDDTSDDNDMMNSNNNMNSMMVPYNMHMTDDEFQENINNNNNNNNNNNDNMYLSSDDGYPSQSNHKWIHFNSLLNYDIHELSKKKKKKKKKISIHSCKNLPLVLVYLSKKIKLNFYKYSMKKPKEETIILLKELNSVENDINDLFLEVDLNEVYYDFLIR</sequence>
<proteinExistence type="evidence at protein level"/>
<feature type="chain" id="PRO_0000356827" description="Protein DOP1 homolog PFC0245c">
    <location>
        <begin position="1"/>
        <end position="3933"/>
    </location>
</feature>
<feature type="transmembrane region" description="Helical" evidence="2">
    <location>
        <begin position="70"/>
        <end position="90"/>
    </location>
</feature>
<feature type="transmembrane region" description="Helical" evidence="2">
    <location>
        <begin position="98"/>
        <end position="118"/>
    </location>
</feature>
<feature type="transmembrane region" description="Helical" evidence="2">
    <location>
        <begin position="140"/>
        <end position="160"/>
    </location>
</feature>
<feature type="transmembrane region" description="Helical" evidence="2">
    <location>
        <begin position="163"/>
        <end position="183"/>
    </location>
</feature>
<feature type="transmembrane region" description="Helical" evidence="2">
    <location>
        <begin position="782"/>
        <end position="802"/>
    </location>
</feature>
<feature type="transmembrane region" description="Helical" evidence="2">
    <location>
        <begin position="842"/>
        <end position="862"/>
    </location>
</feature>
<feature type="transmembrane region" description="Helical" evidence="2">
    <location>
        <begin position="1186"/>
        <end position="1206"/>
    </location>
</feature>
<feature type="transmembrane region" description="Helical" evidence="2">
    <location>
        <begin position="1462"/>
        <end position="1482"/>
    </location>
</feature>
<feature type="transmembrane region" description="Helical" evidence="2">
    <location>
        <begin position="1997"/>
        <end position="2017"/>
    </location>
</feature>
<feature type="transmembrane region" description="Helical" evidence="2">
    <location>
        <begin position="2860"/>
        <end position="2880"/>
    </location>
</feature>
<feature type="transmembrane region" description="Helical" evidence="2">
    <location>
        <begin position="2905"/>
        <end position="2925"/>
    </location>
</feature>
<feature type="transmembrane region" description="Helical" evidence="2">
    <location>
        <begin position="3017"/>
        <end position="3037"/>
    </location>
</feature>
<feature type="transmembrane region" description="Helical" evidence="2">
    <location>
        <begin position="3200"/>
        <end position="3220"/>
    </location>
</feature>
<feature type="transmembrane region" description="Helical" evidence="2">
    <location>
        <begin position="3276"/>
        <end position="3296"/>
    </location>
</feature>
<feature type="region of interest" description="Disordered" evidence="3">
    <location>
        <begin position="468"/>
        <end position="494"/>
    </location>
</feature>
<feature type="region of interest" description="Disordered" evidence="3">
    <location>
        <begin position="543"/>
        <end position="600"/>
    </location>
</feature>
<feature type="region of interest" description="Disordered" evidence="3">
    <location>
        <begin position="614"/>
        <end position="656"/>
    </location>
</feature>
<feature type="region of interest" description="Disordered" evidence="3">
    <location>
        <begin position="1216"/>
        <end position="1284"/>
    </location>
</feature>
<feature type="region of interest" description="Disordered" evidence="3">
    <location>
        <begin position="1361"/>
        <end position="1405"/>
    </location>
</feature>
<feature type="region of interest" description="Disordered" evidence="3">
    <location>
        <begin position="2691"/>
        <end position="2739"/>
    </location>
</feature>
<feature type="region of interest" description="Disordered" evidence="3">
    <location>
        <begin position="3620"/>
        <end position="3646"/>
    </location>
</feature>
<feature type="coiled-coil region" evidence="2">
    <location>
        <begin position="620"/>
        <end position="651"/>
    </location>
</feature>
<feature type="coiled-coil region" evidence="2">
    <location>
        <begin position="1349"/>
        <end position="1403"/>
    </location>
</feature>
<feature type="coiled-coil region" evidence="2">
    <location>
        <begin position="3897"/>
        <end position="3925"/>
    </location>
</feature>
<feature type="compositionally biased region" description="Low complexity" evidence="3">
    <location>
        <begin position="470"/>
        <end position="486"/>
    </location>
</feature>
<feature type="compositionally biased region" description="Acidic residues" evidence="3">
    <location>
        <begin position="546"/>
        <end position="561"/>
    </location>
</feature>
<feature type="compositionally biased region" description="Low complexity" evidence="3">
    <location>
        <begin position="563"/>
        <end position="576"/>
    </location>
</feature>
<feature type="compositionally biased region" description="Low complexity" evidence="3">
    <location>
        <begin position="585"/>
        <end position="597"/>
    </location>
</feature>
<feature type="compositionally biased region" description="Acidic residues" evidence="3">
    <location>
        <begin position="625"/>
        <end position="639"/>
    </location>
</feature>
<feature type="compositionally biased region" description="Low complexity" evidence="3">
    <location>
        <begin position="640"/>
        <end position="656"/>
    </location>
</feature>
<feature type="compositionally biased region" description="Acidic residues" evidence="3">
    <location>
        <begin position="1216"/>
        <end position="1255"/>
    </location>
</feature>
<feature type="compositionally biased region" description="Basic residues" evidence="3">
    <location>
        <begin position="1263"/>
        <end position="1284"/>
    </location>
</feature>
<feature type="compositionally biased region" description="Low complexity" evidence="3">
    <location>
        <begin position="1362"/>
        <end position="1405"/>
    </location>
</feature>
<feature type="compositionally biased region" description="Low complexity" evidence="3">
    <location>
        <begin position="2704"/>
        <end position="2739"/>
    </location>
</feature>
<feature type="compositionally biased region" description="Acidic residues" evidence="3">
    <location>
        <begin position="3637"/>
        <end position="3646"/>
    </location>
</feature>
<protein>
    <recommendedName>
        <fullName>Protein DOP1 homolog PFC0245c</fullName>
    </recommendedName>
</protein>
<gene>
    <name type="ORF">PFC0245c</name>
</gene>